<gene>
    <name evidence="1" type="primary">murE</name>
    <name type="ordered locus">Rv2158c</name>
    <name type="ORF">MTCY270.10</name>
</gene>
<accession>P9WJL3</accession>
<accession>L0T8S9</accession>
<accession>O06219</accession>
<accession>P65477</accession>
<keyword id="KW-0002">3D-structure</keyword>
<keyword id="KW-0067">ATP-binding</keyword>
<keyword id="KW-0131">Cell cycle</keyword>
<keyword id="KW-0132">Cell division</keyword>
<keyword id="KW-0133">Cell shape</keyword>
<keyword id="KW-0961">Cell wall biogenesis/degradation</keyword>
<keyword id="KW-0963">Cytoplasm</keyword>
<keyword id="KW-0436">Ligase</keyword>
<keyword id="KW-0460">Magnesium</keyword>
<keyword id="KW-0547">Nucleotide-binding</keyword>
<keyword id="KW-0573">Peptidoglycan synthesis</keyword>
<keyword id="KW-1185">Reference proteome</keyword>
<name>MURE_MYCTU</name>
<comment type="function">
    <text evidence="1">Catalyzes the addition of meso-diaminopimelic acid to the nucleotide precursor UDP-N-acetylmuramoyl-L-alanyl-D-glutamate (UMAG) in the biosynthesis of bacterial cell-wall peptidoglycan.</text>
</comment>
<comment type="catalytic activity">
    <reaction evidence="1">
        <text>UDP-N-acetyl-alpha-D-muramoyl-L-alanyl-D-glutamate + meso-2,6-diaminopimelate + ATP = UDP-N-acetyl-alpha-D-muramoyl-L-alanyl-gamma-D-glutamyl-meso-2,6-diaminopimelate + ADP + phosphate + H(+)</text>
        <dbReference type="Rhea" id="RHEA:23676"/>
        <dbReference type="ChEBI" id="CHEBI:15378"/>
        <dbReference type="ChEBI" id="CHEBI:30616"/>
        <dbReference type="ChEBI" id="CHEBI:43474"/>
        <dbReference type="ChEBI" id="CHEBI:57791"/>
        <dbReference type="ChEBI" id="CHEBI:83900"/>
        <dbReference type="ChEBI" id="CHEBI:83905"/>
        <dbReference type="ChEBI" id="CHEBI:456216"/>
        <dbReference type="EC" id="6.3.2.13"/>
    </reaction>
</comment>
<comment type="cofactor">
    <cofactor evidence="1">
        <name>Mg(2+)</name>
        <dbReference type="ChEBI" id="CHEBI:18420"/>
    </cofactor>
</comment>
<comment type="pathway">
    <text evidence="1">Cell wall biogenesis; peptidoglycan biosynthesis.</text>
</comment>
<comment type="subcellular location">
    <subcellularLocation>
        <location evidence="1">Cytoplasm</location>
    </subcellularLocation>
</comment>
<comment type="PTM">
    <text evidence="1">Carboxylation is probably crucial for Mg(2+) binding and, consequently, for the gamma-phosphate positioning of ATP.</text>
</comment>
<comment type="miscellaneous">
    <text>Was identified as a high-confidence drug target.</text>
</comment>
<comment type="similarity">
    <text evidence="1">Belongs to the MurCDEF family. MurE subfamily.</text>
</comment>
<dbReference type="EC" id="6.3.2.13" evidence="1"/>
<dbReference type="EMBL" id="AL123456">
    <property type="protein sequence ID" value="CCP44934.1"/>
    <property type="molecule type" value="Genomic_DNA"/>
</dbReference>
<dbReference type="PIR" id="B70580">
    <property type="entry name" value="B70580"/>
</dbReference>
<dbReference type="RefSeq" id="NP_216674.1">
    <property type="nucleotide sequence ID" value="NC_000962.3"/>
</dbReference>
<dbReference type="RefSeq" id="WP_003411189.1">
    <property type="nucleotide sequence ID" value="NZ_NVQJ01000044.1"/>
</dbReference>
<dbReference type="PDB" id="2WTZ">
    <property type="method" value="X-ray"/>
    <property type="resolution" value="3.00 A"/>
    <property type="chains" value="A/B/C/D=1-535"/>
</dbReference>
<dbReference type="PDB" id="2XJA">
    <property type="method" value="X-ray"/>
    <property type="resolution" value="3.00 A"/>
    <property type="chains" value="A/B/C/D=1-535"/>
</dbReference>
<dbReference type="PDBsum" id="2WTZ"/>
<dbReference type="PDBsum" id="2XJA"/>
<dbReference type="SMR" id="P9WJL3"/>
<dbReference type="FunCoup" id="P9WJL3">
    <property type="interactions" value="283"/>
</dbReference>
<dbReference type="STRING" id="83332.Rv2158c"/>
<dbReference type="BindingDB" id="P9WJL3"/>
<dbReference type="ChEMBL" id="CHEMBL5291569"/>
<dbReference type="PaxDb" id="83332-Rv2158c"/>
<dbReference type="DNASU" id="887252"/>
<dbReference type="GeneID" id="887252"/>
<dbReference type="KEGG" id="mtu:Rv2158c"/>
<dbReference type="KEGG" id="mtv:RVBD_2158c"/>
<dbReference type="PATRIC" id="fig|83332.111.peg.2404"/>
<dbReference type="TubercuList" id="Rv2158c"/>
<dbReference type="eggNOG" id="COG0769">
    <property type="taxonomic scope" value="Bacteria"/>
</dbReference>
<dbReference type="InParanoid" id="P9WJL3"/>
<dbReference type="OrthoDB" id="9800958at2"/>
<dbReference type="PhylomeDB" id="P9WJL3"/>
<dbReference type="BioCyc" id="MetaCyc:G185E-6366-MONOMER"/>
<dbReference type="BRENDA" id="6.3.2.13">
    <property type="organism ID" value="3445"/>
</dbReference>
<dbReference type="SABIO-RK" id="P9WJL3"/>
<dbReference type="UniPathway" id="UPA00219"/>
<dbReference type="EvolutionaryTrace" id="P9WJL3"/>
<dbReference type="Proteomes" id="UP000001584">
    <property type="component" value="Chromosome"/>
</dbReference>
<dbReference type="GO" id="GO:0005829">
    <property type="term" value="C:cytosol"/>
    <property type="evidence" value="ECO:0007005"/>
    <property type="project" value="MTBBASE"/>
</dbReference>
<dbReference type="GO" id="GO:0005886">
    <property type="term" value="C:plasma membrane"/>
    <property type="evidence" value="ECO:0007005"/>
    <property type="project" value="MTBBASE"/>
</dbReference>
<dbReference type="GO" id="GO:0005524">
    <property type="term" value="F:ATP binding"/>
    <property type="evidence" value="ECO:0007669"/>
    <property type="project" value="UniProtKB-UniRule"/>
</dbReference>
<dbReference type="GO" id="GO:0000287">
    <property type="term" value="F:magnesium ion binding"/>
    <property type="evidence" value="ECO:0007669"/>
    <property type="project" value="UniProtKB-UniRule"/>
</dbReference>
<dbReference type="GO" id="GO:0008765">
    <property type="term" value="F:UDP-N-acetylmuramoylalanyl-D-glutamate-2,6-diaminopimelate ligase activity"/>
    <property type="evidence" value="ECO:0000314"/>
    <property type="project" value="MTBBASE"/>
</dbReference>
<dbReference type="GO" id="GO:0051301">
    <property type="term" value="P:cell division"/>
    <property type="evidence" value="ECO:0007669"/>
    <property type="project" value="UniProtKB-KW"/>
</dbReference>
<dbReference type="GO" id="GO:0071555">
    <property type="term" value="P:cell wall organization"/>
    <property type="evidence" value="ECO:0007669"/>
    <property type="project" value="UniProtKB-KW"/>
</dbReference>
<dbReference type="GO" id="GO:0009252">
    <property type="term" value="P:peptidoglycan biosynthetic process"/>
    <property type="evidence" value="ECO:0000314"/>
    <property type="project" value="MTBBASE"/>
</dbReference>
<dbReference type="GO" id="GO:0008360">
    <property type="term" value="P:regulation of cell shape"/>
    <property type="evidence" value="ECO:0007669"/>
    <property type="project" value="UniProtKB-KW"/>
</dbReference>
<dbReference type="FunFam" id="3.90.190.20:FF:000006">
    <property type="entry name" value="UDP-N-acetylmuramoyl-L-alanyl-D-glutamate--2,6-diaminopimelate ligase"/>
    <property type="match status" value="1"/>
</dbReference>
<dbReference type="Gene3D" id="3.90.190.20">
    <property type="entry name" value="Mur ligase, C-terminal domain"/>
    <property type="match status" value="1"/>
</dbReference>
<dbReference type="Gene3D" id="3.40.1190.10">
    <property type="entry name" value="Mur-like, catalytic domain"/>
    <property type="match status" value="1"/>
</dbReference>
<dbReference type="Gene3D" id="3.40.1390.10">
    <property type="entry name" value="MurE/MurF, N-terminal domain"/>
    <property type="match status" value="1"/>
</dbReference>
<dbReference type="HAMAP" id="MF_00208">
    <property type="entry name" value="MurE"/>
    <property type="match status" value="1"/>
</dbReference>
<dbReference type="InterPro" id="IPR036565">
    <property type="entry name" value="Mur-like_cat_sf"/>
</dbReference>
<dbReference type="InterPro" id="IPR004101">
    <property type="entry name" value="Mur_ligase_C"/>
</dbReference>
<dbReference type="InterPro" id="IPR036615">
    <property type="entry name" value="Mur_ligase_C_dom_sf"/>
</dbReference>
<dbReference type="InterPro" id="IPR013221">
    <property type="entry name" value="Mur_ligase_cen"/>
</dbReference>
<dbReference type="InterPro" id="IPR000713">
    <property type="entry name" value="Mur_ligase_N"/>
</dbReference>
<dbReference type="InterPro" id="IPR035911">
    <property type="entry name" value="MurE/MurF_N"/>
</dbReference>
<dbReference type="InterPro" id="IPR005761">
    <property type="entry name" value="UDP-N-AcMur-Glu-dNH2Pim_ligase"/>
</dbReference>
<dbReference type="NCBIfam" id="TIGR01085">
    <property type="entry name" value="murE"/>
    <property type="match status" value="1"/>
</dbReference>
<dbReference type="NCBIfam" id="NF001124">
    <property type="entry name" value="PRK00139.1-2"/>
    <property type="match status" value="1"/>
</dbReference>
<dbReference type="NCBIfam" id="NF001126">
    <property type="entry name" value="PRK00139.1-4"/>
    <property type="match status" value="1"/>
</dbReference>
<dbReference type="PANTHER" id="PTHR23135">
    <property type="entry name" value="MUR LIGASE FAMILY MEMBER"/>
    <property type="match status" value="1"/>
</dbReference>
<dbReference type="PANTHER" id="PTHR23135:SF4">
    <property type="entry name" value="UDP-N-ACETYLMURAMOYL-L-ALANYL-D-GLUTAMATE--2,6-DIAMINOPIMELATE LIGASE MURE HOMOLOG, CHLOROPLASTIC"/>
    <property type="match status" value="1"/>
</dbReference>
<dbReference type="Pfam" id="PF01225">
    <property type="entry name" value="Mur_ligase"/>
    <property type="match status" value="1"/>
</dbReference>
<dbReference type="Pfam" id="PF02875">
    <property type="entry name" value="Mur_ligase_C"/>
    <property type="match status" value="1"/>
</dbReference>
<dbReference type="Pfam" id="PF08245">
    <property type="entry name" value="Mur_ligase_M"/>
    <property type="match status" value="1"/>
</dbReference>
<dbReference type="SUPFAM" id="SSF53623">
    <property type="entry name" value="MurD-like peptide ligases, catalytic domain"/>
    <property type="match status" value="1"/>
</dbReference>
<dbReference type="SUPFAM" id="SSF53244">
    <property type="entry name" value="MurD-like peptide ligases, peptide-binding domain"/>
    <property type="match status" value="1"/>
</dbReference>
<dbReference type="SUPFAM" id="SSF63418">
    <property type="entry name" value="MurE/MurF N-terminal domain"/>
    <property type="match status" value="1"/>
</dbReference>
<sequence length="535" mass="55341">MSSLARGISRRRTEVATQVEAAPTGLRPNAVVGVRLAALADQVGAALAEGPAQRAVTEDRTVTGVTLRAQDVSPGDLFAALTGSTTHGARHVGDAIARGAVAVLTDPAGVAEIAGRAAVPVLVHPAPRGVLGGLAATVYGHPSERLTVIGITGTSGKTTTTYLVEAGLRAAGRVAGLIGTIGIRVGGADLPSALTTPEAPTLQAMLAAMVERGVDTVVMEVSSHALALGRVDGTRFAVGAFTNLSRDHLDFHPSMADYFEAKASLFDPDSALRARTAVVCIDDDAGRAMAARAADAITVSAADRPAHWRATDVAPTDAGGQQFTAIDPAGVGHHIGIRLPGRYNVANCLVALAILDTVGVSPEQAVPGLREIRVPGRLEQIDRGQGFLALVDYAHKPEALRSVLTTLAHPDRRLAVVFGAGGDRDPGKRAPMGRIAAQLADLVVVTDDNPRDEDPTAIRREILAGAAEVGGDAQVVEIADRRDAIRHAVAWARPGDVVLIAGKGHETGQRGGGRVRPFDDRVELAAALEALERRA</sequence>
<evidence type="ECO:0000255" key="1">
    <source>
        <dbReference type="HAMAP-Rule" id="MF_00208"/>
    </source>
</evidence>
<evidence type="ECO:0007829" key="2">
    <source>
        <dbReference type="PDB" id="2WTZ"/>
    </source>
</evidence>
<reference key="1">
    <citation type="journal article" date="1998" name="Nature">
        <title>Deciphering the biology of Mycobacterium tuberculosis from the complete genome sequence.</title>
        <authorList>
            <person name="Cole S.T."/>
            <person name="Brosch R."/>
            <person name="Parkhill J."/>
            <person name="Garnier T."/>
            <person name="Churcher C.M."/>
            <person name="Harris D.E."/>
            <person name="Gordon S.V."/>
            <person name="Eiglmeier K."/>
            <person name="Gas S."/>
            <person name="Barry C.E. III"/>
            <person name="Tekaia F."/>
            <person name="Badcock K."/>
            <person name="Basham D."/>
            <person name="Brown D."/>
            <person name="Chillingworth T."/>
            <person name="Connor R."/>
            <person name="Davies R.M."/>
            <person name="Devlin K."/>
            <person name="Feltwell T."/>
            <person name="Gentles S."/>
            <person name="Hamlin N."/>
            <person name="Holroyd S."/>
            <person name="Hornsby T."/>
            <person name="Jagels K."/>
            <person name="Krogh A."/>
            <person name="McLean J."/>
            <person name="Moule S."/>
            <person name="Murphy L.D."/>
            <person name="Oliver S."/>
            <person name="Osborne J."/>
            <person name="Quail M.A."/>
            <person name="Rajandream M.A."/>
            <person name="Rogers J."/>
            <person name="Rutter S."/>
            <person name="Seeger K."/>
            <person name="Skelton S."/>
            <person name="Squares S."/>
            <person name="Squares R."/>
            <person name="Sulston J.E."/>
            <person name="Taylor K."/>
            <person name="Whitehead S."/>
            <person name="Barrell B.G."/>
        </authorList>
    </citation>
    <scope>NUCLEOTIDE SEQUENCE [LARGE SCALE GENOMIC DNA]</scope>
    <source>
        <strain>ATCC 25618 / H37Rv</strain>
    </source>
</reference>
<reference key="2">
    <citation type="journal article" date="2008" name="BMC Syst. Biol.">
        <title>targetTB: a target identification pipeline for Mycobacterium tuberculosis through an interactome, reactome and genome-scale structural analysis.</title>
        <authorList>
            <person name="Raman K."/>
            <person name="Yeturu K."/>
            <person name="Chandra N."/>
        </authorList>
    </citation>
    <scope>IDENTIFICATION AS A DRUG TARGET [LARGE SCALE ANALYSIS]</scope>
</reference>
<reference key="3">
    <citation type="journal article" date="2011" name="Mol. Cell. Proteomics">
        <title>Proteogenomic analysis of Mycobacterium tuberculosis by high resolution mass spectrometry.</title>
        <authorList>
            <person name="Kelkar D.S."/>
            <person name="Kumar D."/>
            <person name="Kumar P."/>
            <person name="Balakrishnan L."/>
            <person name="Muthusamy B."/>
            <person name="Yadav A.K."/>
            <person name="Shrivastava P."/>
            <person name="Marimuthu A."/>
            <person name="Anand S."/>
            <person name="Sundaram H."/>
            <person name="Kingsbury R."/>
            <person name="Harsha H.C."/>
            <person name="Nair B."/>
            <person name="Prasad T.S."/>
            <person name="Chauhan D.S."/>
            <person name="Katoch K."/>
            <person name="Katoch V.M."/>
            <person name="Kumar P."/>
            <person name="Chaerkady R."/>
            <person name="Ramachandran S."/>
            <person name="Dash D."/>
            <person name="Pandey A."/>
        </authorList>
    </citation>
    <scope>IDENTIFICATION BY MASS SPECTROMETRY [LARGE SCALE ANALYSIS]</scope>
    <source>
        <strain>ATCC 25618 / H37Rv</strain>
    </source>
</reference>
<proteinExistence type="evidence at protein level"/>
<feature type="chain" id="PRO_0000101913" description="UDP-N-acetylmuramoyl-L-alanyl-D-glutamate--2,6-diaminopimelate ligase">
    <location>
        <begin position="1"/>
        <end position="535"/>
    </location>
</feature>
<feature type="short sequence motif" description="Meso-diaminopimelate recognition motif">
    <location>
        <begin position="448"/>
        <end position="451"/>
    </location>
</feature>
<feature type="binding site" evidence="1">
    <location>
        <position position="67"/>
    </location>
    <ligand>
        <name>UDP-N-acetyl-alpha-D-muramoyl-L-alanyl-D-glutamate</name>
        <dbReference type="ChEBI" id="CHEBI:83900"/>
    </ligand>
</feature>
<feature type="binding site" evidence="1">
    <location>
        <begin position="153"/>
        <end position="159"/>
    </location>
    <ligand>
        <name>ATP</name>
        <dbReference type="ChEBI" id="CHEBI:30616"/>
    </ligand>
</feature>
<feature type="binding site" evidence="1">
    <location>
        <begin position="195"/>
        <end position="196"/>
    </location>
    <ligand>
        <name>UDP-N-acetyl-alpha-D-muramoyl-L-alanyl-D-glutamate</name>
        <dbReference type="ChEBI" id="CHEBI:83900"/>
    </ligand>
</feature>
<feature type="binding site" evidence="1">
    <location>
        <position position="222"/>
    </location>
    <ligand>
        <name>UDP-N-acetyl-alpha-D-muramoyl-L-alanyl-D-glutamate</name>
        <dbReference type="ChEBI" id="CHEBI:83900"/>
    </ligand>
</feature>
<feature type="binding site" evidence="1">
    <location>
        <position position="230"/>
    </location>
    <ligand>
        <name>UDP-N-acetyl-alpha-D-muramoyl-L-alanyl-D-glutamate</name>
        <dbReference type="ChEBI" id="CHEBI:83900"/>
    </ligand>
</feature>
<feature type="binding site" evidence="1">
    <location>
        <position position="424"/>
    </location>
    <ligand>
        <name>meso-2,6-diaminopimelate</name>
        <dbReference type="ChEBI" id="CHEBI:57791"/>
    </ligand>
</feature>
<feature type="binding site" evidence="1">
    <location>
        <begin position="448"/>
        <end position="451"/>
    </location>
    <ligand>
        <name>meso-2,6-diaminopimelate</name>
        <dbReference type="ChEBI" id="CHEBI:57791"/>
    </ligand>
</feature>
<feature type="binding site" evidence="1">
    <location>
        <position position="502"/>
    </location>
    <ligand>
        <name>meso-2,6-diaminopimelate</name>
        <dbReference type="ChEBI" id="CHEBI:57791"/>
    </ligand>
</feature>
<feature type="binding site" evidence="1">
    <location>
        <position position="506"/>
    </location>
    <ligand>
        <name>meso-2,6-diaminopimelate</name>
        <dbReference type="ChEBI" id="CHEBI:57791"/>
    </ligand>
</feature>
<feature type="modified residue" description="N6-carboxylysine" evidence="1">
    <location>
        <position position="262"/>
    </location>
</feature>
<feature type="helix" evidence="2">
    <location>
        <begin position="36"/>
        <end position="43"/>
    </location>
</feature>
<feature type="strand" evidence="2">
    <location>
        <begin position="46"/>
        <end position="49"/>
    </location>
</feature>
<feature type="turn" evidence="2">
    <location>
        <begin position="57"/>
        <end position="59"/>
    </location>
</feature>
<feature type="strand" evidence="2">
    <location>
        <begin position="64"/>
        <end position="67"/>
    </location>
</feature>
<feature type="helix" evidence="2">
    <location>
        <begin position="69"/>
        <end position="71"/>
    </location>
</feature>
<feature type="strand" evidence="2">
    <location>
        <begin position="76"/>
        <end position="80"/>
    </location>
</feature>
<feature type="helix" evidence="2">
    <location>
        <begin position="88"/>
        <end position="91"/>
    </location>
</feature>
<feature type="helix" evidence="2">
    <location>
        <begin position="92"/>
        <end position="97"/>
    </location>
</feature>
<feature type="strand" evidence="2">
    <location>
        <begin position="102"/>
        <end position="105"/>
    </location>
</feature>
<feature type="helix" evidence="2">
    <location>
        <begin position="107"/>
        <end position="113"/>
    </location>
</feature>
<feature type="strand" evidence="2">
    <location>
        <begin position="121"/>
        <end position="123"/>
    </location>
</feature>
<feature type="strand" evidence="2">
    <location>
        <begin position="125"/>
        <end position="127"/>
    </location>
</feature>
<feature type="helix" evidence="2">
    <location>
        <begin position="128"/>
        <end position="138"/>
    </location>
</feature>
<feature type="helix" evidence="2">
    <location>
        <begin position="142"/>
        <end position="144"/>
    </location>
</feature>
<feature type="strand" evidence="2">
    <location>
        <begin position="145"/>
        <end position="155"/>
    </location>
</feature>
<feature type="helix" evidence="2">
    <location>
        <begin position="157"/>
        <end position="170"/>
    </location>
</feature>
<feature type="strand" evidence="2">
    <location>
        <begin position="175"/>
        <end position="181"/>
    </location>
</feature>
<feature type="strand" evidence="2">
    <location>
        <begin position="183"/>
        <end position="185"/>
    </location>
</feature>
<feature type="strand" evidence="2">
    <location>
        <begin position="188"/>
        <end position="190"/>
    </location>
</feature>
<feature type="strand" evidence="2">
    <location>
        <begin position="193"/>
        <end position="196"/>
    </location>
</feature>
<feature type="helix" evidence="2">
    <location>
        <begin position="199"/>
        <end position="211"/>
    </location>
</feature>
<feature type="strand" evidence="2">
    <location>
        <begin position="216"/>
        <end position="220"/>
    </location>
</feature>
<feature type="helix" evidence="2">
    <location>
        <begin position="223"/>
        <end position="227"/>
    </location>
</feature>
<feature type="turn" evidence="2">
    <location>
        <begin position="228"/>
        <end position="233"/>
    </location>
</feature>
<feature type="strand" evidence="2">
    <location>
        <begin position="236"/>
        <end position="241"/>
    </location>
</feature>
<feature type="turn" evidence="2">
    <location>
        <begin position="249"/>
        <end position="251"/>
    </location>
</feature>
<feature type="strand" evidence="2">
    <location>
        <begin position="252"/>
        <end position="254"/>
    </location>
</feature>
<feature type="helix" evidence="2">
    <location>
        <begin position="255"/>
        <end position="263"/>
    </location>
</feature>
<feature type="turn" evidence="2">
    <location>
        <begin position="264"/>
        <end position="266"/>
    </location>
</feature>
<feature type="strand" evidence="2">
    <location>
        <begin position="275"/>
        <end position="280"/>
    </location>
</feature>
<feature type="helix" evidence="2">
    <location>
        <begin position="284"/>
        <end position="293"/>
    </location>
</feature>
<feature type="strand" evidence="2">
    <location>
        <begin position="297"/>
        <end position="304"/>
    </location>
</feature>
<feature type="strand" evidence="2">
    <location>
        <begin position="307"/>
        <end position="316"/>
    </location>
</feature>
<feature type="turn" evidence="2">
    <location>
        <begin position="317"/>
        <end position="319"/>
    </location>
</feature>
<feature type="strand" evidence="2">
    <location>
        <begin position="320"/>
        <end position="326"/>
    </location>
</feature>
<feature type="strand" evidence="2">
    <location>
        <begin position="332"/>
        <end position="338"/>
    </location>
</feature>
<feature type="helix" evidence="2">
    <location>
        <begin position="342"/>
        <end position="357"/>
    </location>
</feature>
<feature type="helix" evidence="2">
    <location>
        <begin position="362"/>
        <end position="369"/>
    </location>
</feature>
<feature type="strand" evidence="2">
    <location>
        <begin position="377"/>
        <end position="380"/>
    </location>
</feature>
<feature type="strand" evidence="2">
    <location>
        <begin position="386"/>
        <end position="392"/>
    </location>
</feature>
<feature type="helix" evidence="2">
    <location>
        <begin position="397"/>
        <end position="405"/>
    </location>
</feature>
<feature type="strand" evidence="2">
    <location>
        <begin position="410"/>
        <end position="412"/>
    </location>
</feature>
<feature type="strand" evidence="2">
    <location>
        <begin position="414"/>
        <end position="418"/>
    </location>
</feature>
<feature type="helix" evidence="2">
    <location>
        <begin position="426"/>
        <end position="428"/>
    </location>
</feature>
<feature type="helix" evidence="2">
    <location>
        <begin position="429"/>
        <end position="439"/>
    </location>
</feature>
<feature type="strand" evidence="2">
    <location>
        <begin position="441"/>
        <end position="445"/>
    </location>
</feature>
<feature type="helix" evidence="2">
    <location>
        <begin position="455"/>
        <end position="466"/>
    </location>
</feature>
<feature type="strand" evidence="2">
    <location>
        <begin position="474"/>
        <end position="477"/>
    </location>
</feature>
<feature type="helix" evidence="2">
    <location>
        <begin position="481"/>
        <end position="491"/>
    </location>
</feature>
<feature type="strand" evidence="2">
    <location>
        <begin position="497"/>
        <end position="502"/>
    </location>
</feature>
<feature type="helix" evidence="2">
    <location>
        <begin position="522"/>
        <end position="529"/>
    </location>
</feature>
<protein>
    <recommendedName>
        <fullName evidence="1">UDP-N-acetylmuramoyl-L-alanyl-D-glutamate--2,6-diaminopimelate ligase</fullName>
        <ecNumber evidence="1">6.3.2.13</ecNumber>
    </recommendedName>
    <alternativeName>
        <fullName evidence="1">Meso-A2pm-adding enzyme</fullName>
    </alternativeName>
    <alternativeName>
        <fullName evidence="1">Meso-diaminopimelate-adding enzyme</fullName>
    </alternativeName>
    <alternativeName>
        <fullName evidence="1">UDP-MurNAc-L-Ala-D-Glu:meso-diaminopimelate ligase</fullName>
    </alternativeName>
    <alternativeName>
        <fullName evidence="1">UDP-MurNAc-tripeptide synthetase</fullName>
    </alternativeName>
    <alternativeName>
        <fullName evidence="1">UDP-N-acetylmuramyl-tripeptide synthetase</fullName>
    </alternativeName>
</protein>
<organism>
    <name type="scientific">Mycobacterium tuberculosis (strain ATCC 25618 / H37Rv)</name>
    <dbReference type="NCBI Taxonomy" id="83332"/>
    <lineage>
        <taxon>Bacteria</taxon>
        <taxon>Bacillati</taxon>
        <taxon>Actinomycetota</taxon>
        <taxon>Actinomycetes</taxon>
        <taxon>Mycobacteriales</taxon>
        <taxon>Mycobacteriaceae</taxon>
        <taxon>Mycobacterium</taxon>
        <taxon>Mycobacterium tuberculosis complex</taxon>
    </lineage>
</organism>